<reference key="1">
    <citation type="journal article" date="1997" name="Proc. Natl. Acad. Sci. U.S.A.">
        <title>Sequence of a 189-kb segment of the chromosome of Rhodobacter capsulatus SB1003.</title>
        <authorList>
            <person name="Vlcek C."/>
            <person name="Paces V."/>
            <person name="Maltsev N."/>
            <person name="Paces J."/>
            <person name="Haselkorn R."/>
            <person name="Fonstein M."/>
        </authorList>
    </citation>
    <scope>NUCLEOTIDE SEQUENCE [GENOMIC DNA]</scope>
    <source>
        <strain>ATCC BAA-309 / NBRC 16581 / SB1003</strain>
    </source>
</reference>
<reference key="2">
    <citation type="journal article" date="2010" name="J. Bacteriol.">
        <title>Complete genome sequence of the photosynthetic purple nonsulfur bacterium Rhodobacter capsulatus SB 1003.</title>
        <authorList>
            <person name="Strnad H."/>
            <person name="Lapidus A."/>
            <person name="Paces J."/>
            <person name="Ulbrich P."/>
            <person name="Vlcek C."/>
            <person name="Paces V."/>
            <person name="Haselkorn R."/>
        </authorList>
    </citation>
    <scope>NUCLEOTIDE SEQUENCE [LARGE SCALE GENOMIC DNA]</scope>
    <source>
        <strain>ATCC BAA-309 / NBRC 16581 / SB1003</strain>
    </source>
</reference>
<dbReference type="EC" id="6.2.1.1" evidence="1"/>
<dbReference type="EMBL" id="AF010496">
    <property type="protein sequence ID" value="AAC16126.1"/>
    <property type="molecule type" value="Genomic_DNA"/>
</dbReference>
<dbReference type="EMBL" id="CP001312">
    <property type="protein sequence ID" value="ADE85856.1"/>
    <property type="molecule type" value="Genomic_DNA"/>
</dbReference>
<dbReference type="PIR" id="T03473">
    <property type="entry name" value="T03473"/>
</dbReference>
<dbReference type="RefSeq" id="WP_013067835.1">
    <property type="nucleotide sequence ID" value="NC_014034.1"/>
</dbReference>
<dbReference type="SMR" id="O68040"/>
<dbReference type="STRING" id="272942.RCAP_rcc02126"/>
<dbReference type="GeneID" id="31490977"/>
<dbReference type="KEGG" id="rcp:RCAP_rcc02126"/>
<dbReference type="eggNOG" id="COG0365">
    <property type="taxonomic scope" value="Bacteria"/>
</dbReference>
<dbReference type="HOGENOM" id="CLU_000022_3_6_5"/>
<dbReference type="OrthoDB" id="9803968at2"/>
<dbReference type="Proteomes" id="UP000002361">
    <property type="component" value="Chromosome"/>
</dbReference>
<dbReference type="GO" id="GO:0005829">
    <property type="term" value="C:cytosol"/>
    <property type="evidence" value="ECO:0007669"/>
    <property type="project" value="TreeGrafter"/>
</dbReference>
<dbReference type="GO" id="GO:0003987">
    <property type="term" value="F:acetate-CoA ligase activity"/>
    <property type="evidence" value="ECO:0007669"/>
    <property type="project" value="UniProtKB-UniRule"/>
</dbReference>
<dbReference type="GO" id="GO:0016208">
    <property type="term" value="F:AMP binding"/>
    <property type="evidence" value="ECO:0007669"/>
    <property type="project" value="InterPro"/>
</dbReference>
<dbReference type="GO" id="GO:0005524">
    <property type="term" value="F:ATP binding"/>
    <property type="evidence" value="ECO:0007669"/>
    <property type="project" value="UniProtKB-KW"/>
</dbReference>
<dbReference type="GO" id="GO:0046872">
    <property type="term" value="F:metal ion binding"/>
    <property type="evidence" value="ECO:0007669"/>
    <property type="project" value="UniProtKB-KW"/>
</dbReference>
<dbReference type="GO" id="GO:0019427">
    <property type="term" value="P:acetyl-CoA biosynthetic process from acetate"/>
    <property type="evidence" value="ECO:0007669"/>
    <property type="project" value="InterPro"/>
</dbReference>
<dbReference type="CDD" id="cd05966">
    <property type="entry name" value="ACS"/>
    <property type="match status" value="1"/>
</dbReference>
<dbReference type="FunFam" id="3.30.300.30:FF:000004">
    <property type="entry name" value="Acetyl-coenzyme A synthetase"/>
    <property type="match status" value="1"/>
</dbReference>
<dbReference type="FunFam" id="3.40.50.12780:FF:000001">
    <property type="entry name" value="Acetyl-coenzyme A synthetase"/>
    <property type="match status" value="1"/>
</dbReference>
<dbReference type="Gene3D" id="3.30.300.30">
    <property type="match status" value="1"/>
</dbReference>
<dbReference type="Gene3D" id="3.40.50.12780">
    <property type="entry name" value="N-terminal domain of ligase-like"/>
    <property type="match status" value="1"/>
</dbReference>
<dbReference type="HAMAP" id="MF_01123">
    <property type="entry name" value="Ac_CoA_synth"/>
    <property type="match status" value="1"/>
</dbReference>
<dbReference type="InterPro" id="IPR011904">
    <property type="entry name" value="Ac_CoA_lig"/>
</dbReference>
<dbReference type="InterPro" id="IPR032387">
    <property type="entry name" value="ACAS_N"/>
</dbReference>
<dbReference type="InterPro" id="IPR025110">
    <property type="entry name" value="AMP-bd_C"/>
</dbReference>
<dbReference type="InterPro" id="IPR045851">
    <property type="entry name" value="AMP-bd_C_sf"/>
</dbReference>
<dbReference type="InterPro" id="IPR020845">
    <property type="entry name" value="AMP-binding_CS"/>
</dbReference>
<dbReference type="InterPro" id="IPR000873">
    <property type="entry name" value="AMP-dep_synth/lig_dom"/>
</dbReference>
<dbReference type="InterPro" id="IPR042099">
    <property type="entry name" value="ANL_N_sf"/>
</dbReference>
<dbReference type="NCBIfam" id="TIGR02188">
    <property type="entry name" value="Ac_CoA_lig_AcsA"/>
    <property type="match status" value="1"/>
</dbReference>
<dbReference type="NCBIfam" id="NF001208">
    <property type="entry name" value="PRK00174.1"/>
    <property type="match status" value="1"/>
</dbReference>
<dbReference type="PANTHER" id="PTHR24095">
    <property type="entry name" value="ACETYL-COENZYME A SYNTHETASE"/>
    <property type="match status" value="1"/>
</dbReference>
<dbReference type="PANTHER" id="PTHR24095:SF14">
    <property type="entry name" value="ACETYL-COENZYME A SYNTHETASE 1"/>
    <property type="match status" value="1"/>
</dbReference>
<dbReference type="Pfam" id="PF16177">
    <property type="entry name" value="ACAS_N"/>
    <property type="match status" value="1"/>
</dbReference>
<dbReference type="Pfam" id="PF00501">
    <property type="entry name" value="AMP-binding"/>
    <property type="match status" value="1"/>
</dbReference>
<dbReference type="Pfam" id="PF13193">
    <property type="entry name" value="AMP-binding_C"/>
    <property type="match status" value="1"/>
</dbReference>
<dbReference type="SUPFAM" id="SSF56801">
    <property type="entry name" value="Acetyl-CoA synthetase-like"/>
    <property type="match status" value="1"/>
</dbReference>
<dbReference type="PROSITE" id="PS00455">
    <property type="entry name" value="AMP_BINDING"/>
    <property type="match status" value="1"/>
</dbReference>
<name>ACSA_RHOCB</name>
<gene>
    <name evidence="1" type="primary">acsA</name>
    <name type="synonym">acs</name>
    <name type="ordered locus">RCAP_rcc02126</name>
</gene>
<evidence type="ECO:0000255" key="1">
    <source>
        <dbReference type="HAMAP-Rule" id="MF_01123"/>
    </source>
</evidence>
<feature type="chain" id="PRO_0000208384" description="Acetyl-coenzyme A synthetase">
    <location>
        <begin position="1"/>
        <end position="656"/>
    </location>
</feature>
<feature type="binding site" evidence="1">
    <location>
        <begin position="198"/>
        <end position="201"/>
    </location>
    <ligand>
        <name>CoA</name>
        <dbReference type="ChEBI" id="CHEBI:57287"/>
    </ligand>
</feature>
<feature type="binding site" evidence="1">
    <location>
        <position position="316"/>
    </location>
    <ligand>
        <name>CoA</name>
        <dbReference type="ChEBI" id="CHEBI:57287"/>
    </ligand>
</feature>
<feature type="binding site" evidence="1">
    <location>
        <begin position="392"/>
        <end position="394"/>
    </location>
    <ligand>
        <name>ATP</name>
        <dbReference type="ChEBI" id="CHEBI:30616"/>
    </ligand>
</feature>
<feature type="binding site" evidence="1">
    <location>
        <begin position="416"/>
        <end position="421"/>
    </location>
    <ligand>
        <name>ATP</name>
        <dbReference type="ChEBI" id="CHEBI:30616"/>
    </ligand>
</feature>
<feature type="binding site" evidence="1">
    <location>
        <position position="507"/>
    </location>
    <ligand>
        <name>ATP</name>
        <dbReference type="ChEBI" id="CHEBI:30616"/>
    </ligand>
</feature>
<feature type="binding site" evidence="1">
    <location>
        <position position="522"/>
    </location>
    <ligand>
        <name>ATP</name>
        <dbReference type="ChEBI" id="CHEBI:30616"/>
    </ligand>
</feature>
<feature type="binding site" evidence="1">
    <location>
        <position position="530"/>
    </location>
    <ligand>
        <name>CoA</name>
        <dbReference type="ChEBI" id="CHEBI:57287"/>
    </ligand>
</feature>
<feature type="binding site" evidence="1">
    <location>
        <position position="533"/>
    </location>
    <ligand>
        <name>ATP</name>
        <dbReference type="ChEBI" id="CHEBI:30616"/>
    </ligand>
</feature>
<feature type="binding site" evidence="1">
    <location>
        <position position="544"/>
    </location>
    <ligand>
        <name>Mg(2+)</name>
        <dbReference type="ChEBI" id="CHEBI:18420"/>
    </ligand>
</feature>
<feature type="binding site" evidence="1">
    <location>
        <position position="546"/>
    </location>
    <ligand>
        <name>Mg(2+)</name>
        <dbReference type="ChEBI" id="CHEBI:18420"/>
    </ligand>
</feature>
<feature type="binding site" evidence="1">
    <location>
        <position position="549"/>
    </location>
    <ligand>
        <name>Mg(2+)</name>
        <dbReference type="ChEBI" id="CHEBI:18420"/>
    </ligand>
</feature>
<feature type="binding site" evidence="1">
    <location>
        <position position="591"/>
    </location>
    <ligand>
        <name>CoA</name>
        <dbReference type="ChEBI" id="CHEBI:57287"/>
    </ligand>
</feature>
<feature type="modified residue" description="N6-acetyllysine" evidence="1">
    <location>
        <position position="616"/>
    </location>
</feature>
<sequence length="656" mass="72703">MGVQGQPSVAPALREVPAGFETAHANGAKYLEMYRESLENPDAFWGREGKRLDWITPYTKVKNTDFTFGKVSIKWFEDGVLNASVNCIDRHLRDRALQTAIIFEPDDPKEPARHITYKELSEKVNRMANVLLSQGIMRGDRVVIYLPMIPEAAYAMLACARIGAIHSIVFAGFSPDALANRINDCGAKLVITADTAPRGGRRTPLKANTDAALLHCSDKVRCLVVKHTGDQISWVHGRDVDLLYLMEHVSPECPPRPMNAEDPLFILYTSGSTGKPKGVVHTTGGYLVYAAMTHQYTFDYKDGDVFWCTADVGWVTGHSYIIYGPLANGATTLMFEGVPTFPDAGRFWAVCEKHKVNQFYTAPTAIRALMGQGPEWVEKYDLSSLRVLGSVGEPINPEAWVWYDKYVGKGKCPIVDTFWQTETGGHMITPLPGATPTKPGSATNPFFGVKPVVLDPQTAVRIGEVECEGVLCISDSWPGQMRTVWGDHDRFQETYFGQYRGYYFTGDGCRRDKDGYYWITGRVDDVINVSGHRMGTAEVESALVAHPQVAEAAVVGYPHDIKGQGIYAYVTLMNGIEPSEDLRKDLVKWVRTEIGPIASPDLIQWAPGLPKTRSGKIMRRILRKIAENDYGALGDISTLADPGVVQELIDNRMNRA</sequence>
<keyword id="KW-0007">Acetylation</keyword>
<keyword id="KW-0067">ATP-binding</keyword>
<keyword id="KW-0436">Ligase</keyword>
<keyword id="KW-0460">Magnesium</keyword>
<keyword id="KW-0479">Metal-binding</keyword>
<keyword id="KW-0547">Nucleotide-binding</keyword>
<keyword id="KW-1185">Reference proteome</keyword>
<proteinExistence type="inferred from homology"/>
<organism>
    <name type="scientific">Rhodobacter capsulatus (strain ATCC BAA-309 / NBRC 16581 / SB1003)</name>
    <dbReference type="NCBI Taxonomy" id="272942"/>
    <lineage>
        <taxon>Bacteria</taxon>
        <taxon>Pseudomonadati</taxon>
        <taxon>Pseudomonadota</taxon>
        <taxon>Alphaproteobacteria</taxon>
        <taxon>Rhodobacterales</taxon>
        <taxon>Rhodobacter group</taxon>
        <taxon>Rhodobacter</taxon>
    </lineage>
</organism>
<accession>O68040</accession>
<accession>D5AV74</accession>
<protein>
    <recommendedName>
        <fullName evidence="1">Acetyl-coenzyme A synthetase</fullName>
        <shortName evidence="1">AcCoA synthetase</shortName>
        <shortName evidence="1">Acs</shortName>
        <ecNumber evidence="1">6.2.1.1</ecNumber>
    </recommendedName>
    <alternativeName>
        <fullName evidence="1">Acetate--CoA ligase</fullName>
    </alternativeName>
    <alternativeName>
        <fullName evidence="1">Acyl-activating enzyme</fullName>
    </alternativeName>
</protein>
<comment type="function">
    <text evidence="1">Catalyzes the conversion of acetate into acetyl-CoA (AcCoA), an essential intermediate at the junction of anabolic and catabolic pathways. AcsA undergoes a two-step reaction. In the first half reaction, AcsA combines acetate with ATP to form acetyl-adenylate (AcAMP) intermediate. In the second half reaction, it can then transfer the acetyl group from AcAMP to the sulfhydryl group of CoA, forming the product AcCoA.</text>
</comment>
<comment type="catalytic activity">
    <reaction evidence="1">
        <text>acetate + ATP + CoA = acetyl-CoA + AMP + diphosphate</text>
        <dbReference type="Rhea" id="RHEA:23176"/>
        <dbReference type="ChEBI" id="CHEBI:30089"/>
        <dbReference type="ChEBI" id="CHEBI:30616"/>
        <dbReference type="ChEBI" id="CHEBI:33019"/>
        <dbReference type="ChEBI" id="CHEBI:57287"/>
        <dbReference type="ChEBI" id="CHEBI:57288"/>
        <dbReference type="ChEBI" id="CHEBI:456215"/>
        <dbReference type="EC" id="6.2.1.1"/>
    </reaction>
</comment>
<comment type="cofactor">
    <cofactor evidence="1">
        <name>Mg(2+)</name>
        <dbReference type="ChEBI" id="CHEBI:18420"/>
    </cofactor>
</comment>
<comment type="PTM">
    <text evidence="1">Acetylated. Deacetylation by the SIR2-homolog deacetylase activates the enzyme.</text>
</comment>
<comment type="similarity">
    <text evidence="1">Belongs to the ATP-dependent AMP-binding enzyme family.</text>
</comment>